<protein>
    <recommendedName>
        <fullName>Periplakin</fullName>
    </recommendedName>
</protein>
<feature type="chain" id="PRO_0000078150" description="Periplakin">
    <location>
        <begin position="1"/>
        <end position="1755"/>
    </location>
</feature>
<feature type="repeat" description="Spectrin 1">
    <location>
        <begin position="214"/>
        <end position="315"/>
    </location>
</feature>
<feature type="repeat" description="Spectrin 2">
    <location>
        <begin position="321"/>
        <end position="483"/>
    </location>
</feature>
<feature type="domain" description="SH3" evidence="3">
    <location>
        <begin position="397"/>
        <end position="453"/>
    </location>
</feature>
<feature type="repeat" description="Spectrin 3">
    <location>
        <begin position="503"/>
        <end position="610"/>
    </location>
</feature>
<feature type="repeat" description="Plectin 1">
    <location>
        <begin position="1650"/>
        <end position="1684"/>
    </location>
</feature>
<feature type="repeat" description="Plectin 2">
    <location>
        <begin position="1699"/>
        <end position="1734"/>
    </location>
</feature>
<feature type="region of interest" description="Disordered" evidence="4">
    <location>
        <begin position="1"/>
        <end position="20"/>
    </location>
</feature>
<feature type="region of interest" description="Interacts with BFSP2 and VIM" evidence="7">
    <location>
        <begin position="1556"/>
        <end position="1755"/>
    </location>
</feature>
<feature type="coiled-coil region" evidence="2">
    <location>
        <begin position="16"/>
        <end position="125"/>
    </location>
</feature>
<feature type="coiled-coil region" evidence="2">
    <location>
        <begin position="182"/>
        <end position="387"/>
    </location>
</feature>
<feature type="coiled-coil region" evidence="2">
    <location>
        <begin position="611"/>
        <end position="819"/>
    </location>
</feature>
<feature type="coiled-coil region" evidence="2">
    <location>
        <begin position="883"/>
        <end position="1644"/>
    </location>
</feature>
<feature type="compositionally biased region" description="Basic residues" evidence="4">
    <location>
        <begin position="1"/>
        <end position="11"/>
    </location>
</feature>
<feature type="modified residue" description="Phosphoserine" evidence="1">
    <location>
        <position position="14"/>
    </location>
</feature>
<feature type="modified residue" description="Phosphoserine" evidence="1">
    <location>
        <position position="463"/>
    </location>
</feature>
<feature type="modified residue" description="Phosphoserine" evidence="1">
    <location>
        <position position="885"/>
    </location>
</feature>
<feature type="modified residue" description="Phosphoserine" evidence="1">
    <location>
        <position position="947"/>
    </location>
</feature>
<feature type="modified residue" description="Phosphoserine" evidence="1">
    <location>
        <position position="1583"/>
    </location>
</feature>
<feature type="modified residue" description="Phosphoserine" evidence="9 10">
    <location>
        <position position="1656"/>
    </location>
</feature>
<feature type="sequence conflict" description="In Ref. 2; AAF29436." evidence="8" ref="2">
    <original>E</original>
    <variation>Q</variation>
    <location>
        <position position="166"/>
    </location>
</feature>
<feature type="sequence conflict" description="In Ref. 2; AAF29436." evidence="8" ref="2">
    <original>N</original>
    <variation>T</variation>
    <location>
        <position position="592"/>
    </location>
</feature>
<feature type="sequence conflict" description="In Ref. 2; AAF29436." evidence="8" ref="2">
    <original>R</original>
    <variation>S</variation>
    <location>
        <position position="648"/>
    </location>
</feature>
<feature type="sequence conflict" description="In Ref. 2; AAF29436." evidence="8" ref="2">
    <original>GK</original>
    <variation>EQ</variation>
    <location>
        <begin position="671"/>
        <end position="672"/>
    </location>
</feature>
<feature type="sequence conflict" description="In Ref. 2; AAF29436." evidence="8" ref="2">
    <original>T</original>
    <variation>A</variation>
    <location>
        <position position="983"/>
    </location>
</feature>
<feature type="sequence conflict" description="In Ref. 2; AAF29436." evidence="8" ref="2">
    <original>G</original>
    <variation>R</variation>
    <location>
        <position position="1325"/>
    </location>
</feature>
<feature type="sequence conflict" description="In Ref. 2; AAF29436." evidence="8" ref="2">
    <original>QR</original>
    <variation>G</variation>
    <location>
        <begin position="1344"/>
        <end position="1345"/>
    </location>
</feature>
<proteinExistence type="evidence at protein level"/>
<reference key="1">
    <citation type="journal article" date="2002" name="J. Cell Sci.">
        <title>Binding of protein kinase B to the plakin family member periplakin.</title>
        <authorList>
            <person name="van den Heuvel A.P."/>
            <person name="de Vries-Smits A.M.M."/>
            <person name="van Weeren P.C."/>
            <person name="Dijkers P.F."/>
            <person name="de Bruyn K.M."/>
            <person name="Riedl J.A."/>
            <person name="Burgering B.M.T."/>
        </authorList>
    </citation>
    <scope>NUCLEOTIDE SEQUENCE [MRNA]</scope>
    <scope>INTERACTION WITH AKT1 AND VIM</scope>
    <source>
        <tissue>Embryo</tissue>
    </source>
</reference>
<reference key="2">
    <citation type="journal article" date="2004" name="Mol. Cell. Biol.">
        <title>Periplakin gene targeting reveals a constituent of the cornified cell envelope dispensable for normal mouse development.</title>
        <authorList>
            <person name="Aho S."/>
            <person name="Li K."/>
            <person name="Ryoo Y."/>
            <person name="McGee C."/>
            <person name="Ishida-Yamamoto A."/>
            <person name="Uitto J."/>
            <person name="Klement J.F."/>
        </authorList>
    </citation>
    <scope>NUCLEOTIDE SEQUENCE [GENOMIC DNA]</scope>
    <scope>SUBCELLULAR LOCATION</scope>
    <scope>DEVELOPMENTAL STAGE</scope>
    <source>
        <strain>129/Sv</strain>
    </source>
</reference>
<reference key="3">
    <citation type="journal article" date="2005" name="Science">
        <title>The transcriptional landscape of the mammalian genome.</title>
        <authorList>
            <person name="Carninci P."/>
            <person name="Kasukawa T."/>
            <person name="Katayama S."/>
            <person name="Gough J."/>
            <person name="Frith M.C."/>
            <person name="Maeda N."/>
            <person name="Oyama R."/>
            <person name="Ravasi T."/>
            <person name="Lenhard B."/>
            <person name="Wells C."/>
            <person name="Kodzius R."/>
            <person name="Shimokawa K."/>
            <person name="Bajic V.B."/>
            <person name="Brenner S.E."/>
            <person name="Batalov S."/>
            <person name="Forrest A.R."/>
            <person name="Zavolan M."/>
            <person name="Davis M.J."/>
            <person name="Wilming L.G."/>
            <person name="Aidinis V."/>
            <person name="Allen J.E."/>
            <person name="Ambesi-Impiombato A."/>
            <person name="Apweiler R."/>
            <person name="Aturaliya R.N."/>
            <person name="Bailey T.L."/>
            <person name="Bansal M."/>
            <person name="Baxter L."/>
            <person name="Beisel K.W."/>
            <person name="Bersano T."/>
            <person name="Bono H."/>
            <person name="Chalk A.M."/>
            <person name="Chiu K.P."/>
            <person name="Choudhary V."/>
            <person name="Christoffels A."/>
            <person name="Clutterbuck D.R."/>
            <person name="Crowe M.L."/>
            <person name="Dalla E."/>
            <person name="Dalrymple B.P."/>
            <person name="de Bono B."/>
            <person name="Della Gatta G."/>
            <person name="di Bernardo D."/>
            <person name="Down T."/>
            <person name="Engstrom P."/>
            <person name="Fagiolini M."/>
            <person name="Faulkner G."/>
            <person name="Fletcher C.F."/>
            <person name="Fukushima T."/>
            <person name="Furuno M."/>
            <person name="Futaki S."/>
            <person name="Gariboldi M."/>
            <person name="Georgii-Hemming P."/>
            <person name="Gingeras T.R."/>
            <person name="Gojobori T."/>
            <person name="Green R.E."/>
            <person name="Gustincich S."/>
            <person name="Harbers M."/>
            <person name="Hayashi Y."/>
            <person name="Hensch T.K."/>
            <person name="Hirokawa N."/>
            <person name="Hill D."/>
            <person name="Huminiecki L."/>
            <person name="Iacono M."/>
            <person name="Ikeo K."/>
            <person name="Iwama A."/>
            <person name="Ishikawa T."/>
            <person name="Jakt M."/>
            <person name="Kanapin A."/>
            <person name="Katoh M."/>
            <person name="Kawasawa Y."/>
            <person name="Kelso J."/>
            <person name="Kitamura H."/>
            <person name="Kitano H."/>
            <person name="Kollias G."/>
            <person name="Krishnan S.P."/>
            <person name="Kruger A."/>
            <person name="Kummerfeld S.K."/>
            <person name="Kurochkin I.V."/>
            <person name="Lareau L.F."/>
            <person name="Lazarevic D."/>
            <person name="Lipovich L."/>
            <person name="Liu J."/>
            <person name="Liuni S."/>
            <person name="McWilliam S."/>
            <person name="Madan Babu M."/>
            <person name="Madera M."/>
            <person name="Marchionni L."/>
            <person name="Matsuda H."/>
            <person name="Matsuzawa S."/>
            <person name="Miki H."/>
            <person name="Mignone F."/>
            <person name="Miyake S."/>
            <person name="Morris K."/>
            <person name="Mottagui-Tabar S."/>
            <person name="Mulder N."/>
            <person name="Nakano N."/>
            <person name="Nakauchi H."/>
            <person name="Ng P."/>
            <person name="Nilsson R."/>
            <person name="Nishiguchi S."/>
            <person name="Nishikawa S."/>
            <person name="Nori F."/>
            <person name="Ohara O."/>
            <person name="Okazaki Y."/>
            <person name="Orlando V."/>
            <person name="Pang K.C."/>
            <person name="Pavan W.J."/>
            <person name="Pavesi G."/>
            <person name="Pesole G."/>
            <person name="Petrovsky N."/>
            <person name="Piazza S."/>
            <person name="Reed J."/>
            <person name="Reid J.F."/>
            <person name="Ring B.Z."/>
            <person name="Ringwald M."/>
            <person name="Rost B."/>
            <person name="Ruan Y."/>
            <person name="Salzberg S.L."/>
            <person name="Sandelin A."/>
            <person name="Schneider C."/>
            <person name="Schoenbach C."/>
            <person name="Sekiguchi K."/>
            <person name="Semple C.A."/>
            <person name="Seno S."/>
            <person name="Sessa L."/>
            <person name="Sheng Y."/>
            <person name="Shibata Y."/>
            <person name="Shimada H."/>
            <person name="Shimada K."/>
            <person name="Silva D."/>
            <person name="Sinclair B."/>
            <person name="Sperling S."/>
            <person name="Stupka E."/>
            <person name="Sugiura K."/>
            <person name="Sultana R."/>
            <person name="Takenaka Y."/>
            <person name="Taki K."/>
            <person name="Tammoja K."/>
            <person name="Tan S.L."/>
            <person name="Tang S."/>
            <person name="Taylor M.S."/>
            <person name="Tegner J."/>
            <person name="Teichmann S.A."/>
            <person name="Ueda H.R."/>
            <person name="van Nimwegen E."/>
            <person name="Verardo R."/>
            <person name="Wei C.L."/>
            <person name="Yagi K."/>
            <person name="Yamanishi H."/>
            <person name="Zabarovsky E."/>
            <person name="Zhu S."/>
            <person name="Zimmer A."/>
            <person name="Hide W."/>
            <person name="Bult C."/>
            <person name="Grimmond S.M."/>
            <person name="Teasdale R.D."/>
            <person name="Liu E.T."/>
            <person name="Brusic V."/>
            <person name="Quackenbush J."/>
            <person name="Wahlestedt C."/>
            <person name="Mattick J.S."/>
            <person name="Hume D.A."/>
            <person name="Kai C."/>
            <person name="Sasaki D."/>
            <person name="Tomaru Y."/>
            <person name="Fukuda S."/>
            <person name="Kanamori-Katayama M."/>
            <person name="Suzuki M."/>
            <person name="Aoki J."/>
            <person name="Arakawa T."/>
            <person name="Iida J."/>
            <person name="Imamura K."/>
            <person name="Itoh M."/>
            <person name="Kato T."/>
            <person name="Kawaji H."/>
            <person name="Kawagashira N."/>
            <person name="Kawashima T."/>
            <person name="Kojima M."/>
            <person name="Kondo S."/>
            <person name="Konno H."/>
            <person name="Nakano K."/>
            <person name="Ninomiya N."/>
            <person name="Nishio T."/>
            <person name="Okada M."/>
            <person name="Plessy C."/>
            <person name="Shibata K."/>
            <person name="Shiraki T."/>
            <person name="Suzuki S."/>
            <person name="Tagami M."/>
            <person name="Waki K."/>
            <person name="Watahiki A."/>
            <person name="Okamura-Oho Y."/>
            <person name="Suzuki H."/>
            <person name="Kawai J."/>
            <person name="Hayashizaki Y."/>
        </authorList>
    </citation>
    <scope>NUCLEOTIDE SEQUENCE [LARGE SCALE MRNA] OF 1643-1755</scope>
    <source>
        <strain>C57BL/6J</strain>
        <tissue>Head</tissue>
    </source>
</reference>
<reference key="4">
    <citation type="journal article" date="1998" name="Genomics">
        <title>cDNA cloning, mRNA expression, and chromosomal mapping of human and mouse periplakin genes.</title>
        <authorList>
            <person name="Aho S."/>
            <person name="McLean W.H.I."/>
            <person name="Li K."/>
            <person name="Uitto J."/>
        </authorList>
    </citation>
    <scope>NUCLEOTIDE SEQUENCE [GENOMIC DNA] OF 1647-1755</scope>
    <source>
        <strain>C57BL/6J</strain>
    </source>
</reference>
<reference key="5">
    <citation type="journal article" date="2007" name="Proc. Natl. Acad. Sci. U.S.A.">
        <title>Large-scale phosphorylation analysis of mouse liver.</title>
        <authorList>
            <person name="Villen J."/>
            <person name="Beausoleil S.A."/>
            <person name="Gerber S.A."/>
            <person name="Gygi S.P."/>
        </authorList>
    </citation>
    <scope>PHOSPHORYLATION [LARGE SCALE ANALYSIS] AT SER-1656</scope>
    <scope>IDENTIFICATION BY MASS SPECTROMETRY [LARGE SCALE ANALYSIS]</scope>
    <source>
        <tissue>Liver</tissue>
    </source>
</reference>
<reference key="6">
    <citation type="journal article" date="2009" name="Invest. Ophthalmol. Vis. Sci.">
        <title>Periplakin interactions with lens intermediate and beaded filaments.</title>
        <authorList>
            <person name="Yoon K.H."/>
            <person name="FitzGerald P.G."/>
        </authorList>
    </citation>
    <scope>IDENTIFICATION IN A COMPLEX WITH BFSP1 AND BFSP2</scope>
    <scope>INTERACTION WITH VIM AND BFSP2</scope>
    <scope>SUBCELLULAR LOCATION</scope>
    <scope>TISSUE SPECIFICITY</scope>
    <scope>DEVELOPMENTAL STAGE</scope>
    <scope>REGION</scope>
</reference>
<reference key="7">
    <citation type="journal article" date="2010" name="Cell">
        <title>A tissue-specific atlas of mouse protein phosphorylation and expression.</title>
        <authorList>
            <person name="Huttlin E.L."/>
            <person name="Jedrychowski M.P."/>
            <person name="Elias J.E."/>
            <person name="Goswami T."/>
            <person name="Rad R."/>
            <person name="Beausoleil S.A."/>
            <person name="Villen J."/>
            <person name="Haas W."/>
            <person name="Sowa M.E."/>
            <person name="Gygi S.P."/>
        </authorList>
    </citation>
    <scope>PHOSPHORYLATION [LARGE SCALE ANALYSIS] AT SER-1656</scope>
    <scope>IDENTIFICATION BY MASS SPECTROMETRY [LARGE SCALE ANALYSIS]</scope>
    <source>
        <tissue>Kidney</tissue>
        <tissue>Lung</tissue>
    </source>
</reference>
<name>PEPL_MOUSE</name>
<keyword id="KW-0965">Cell junction</keyword>
<keyword id="KW-1003">Cell membrane</keyword>
<keyword id="KW-0175">Coiled coil</keyword>
<keyword id="KW-0963">Cytoplasm</keyword>
<keyword id="KW-0206">Cytoskeleton</keyword>
<keyword id="KW-0417">Keratinization</keyword>
<keyword id="KW-0472">Membrane</keyword>
<keyword id="KW-0597">Phosphoprotein</keyword>
<keyword id="KW-1185">Reference proteome</keyword>
<keyword id="KW-0677">Repeat</keyword>
<keyword id="KW-0728">SH3 domain</keyword>
<dbReference type="EMBL" id="AF126834">
    <property type="protein sequence ID" value="AAD20642.1"/>
    <property type="molecule type" value="mRNA"/>
</dbReference>
<dbReference type="EMBL" id="AF116523">
    <property type="protein sequence ID" value="AAF29436.2"/>
    <property type="molecule type" value="Genomic_DNA"/>
</dbReference>
<dbReference type="EMBL" id="AF116519">
    <property type="protein sequence ID" value="AAF29436.2"/>
    <property type="status" value="JOINED"/>
    <property type="molecule type" value="Genomic_DNA"/>
</dbReference>
<dbReference type="EMBL" id="AF116520">
    <property type="protein sequence ID" value="AAF29436.2"/>
    <property type="status" value="JOINED"/>
    <property type="molecule type" value="Genomic_DNA"/>
</dbReference>
<dbReference type="EMBL" id="AF116521">
    <property type="protein sequence ID" value="AAF29436.2"/>
    <property type="status" value="JOINED"/>
    <property type="molecule type" value="Genomic_DNA"/>
</dbReference>
<dbReference type="EMBL" id="AF116522">
    <property type="protein sequence ID" value="AAF29436.2"/>
    <property type="status" value="JOINED"/>
    <property type="molecule type" value="Genomic_DNA"/>
</dbReference>
<dbReference type="EMBL" id="AK014700">
    <property type="protein sequence ID" value="BAB29510.1"/>
    <property type="molecule type" value="mRNA"/>
</dbReference>
<dbReference type="EMBL" id="AF013715">
    <property type="protein sequence ID" value="AAC40068.1"/>
    <property type="molecule type" value="Genomic_DNA"/>
</dbReference>
<dbReference type="RefSeq" id="NP_032935.2">
    <property type="nucleotide sequence ID" value="NM_008909.2"/>
</dbReference>
<dbReference type="SMR" id="Q9R269"/>
<dbReference type="BioGRID" id="202331">
    <property type="interactions" value="9"/>
</dbReference>
<dbReference type="FunCoup" id="Q9R269">
    <property type="interactions" value="160"/>
</dbReference>
<dbReference type="IntAct" id="Q9R269">
    <property type="interactions" value="4"/>
</dbReference>
<dbReference type="STRING" id="10090.ENSMUSP00000039360"/>
<dbReference type="GlyGen" id="Q9R269">
    <property type="glycosylation" value="2 sites, 1 N-linked glycan (1 site), 1 O-linked glycan (1 site)"/>
</dbReference>
<dbReference type="iPTMnet" id="Q9R269"/>
<dbReference type="PhosphoSitePlus" id="Q9R269"/>
<dbReference type="PaxDb" id="10090-ENSMUSP00000039360"/>
<dbReference type="ProteomicsDB" id="287916"/>
<dbReference type="Pumba" id="Q9R269"/>
<dbReference type="DNASU" id="19041"/>
<dbReference type="GeneID" id="19041"/>
<dbReference type="KEGG" id="mmu:19041"/>
<dbReference type="AGR" id="MGI:1194898"/>
<dbReference type="CTD" id="5493"/>
<dbReference type="MGI" id="MGI:1194898">
    <property type="gene designation" value="Ppl"/>
</dbReference>
<dbReference type="eggNOG" id="KOG0516">
    <property type="taxonomic scope" value="Eukaryota"/>
</dbReference>
<dbReference type="InParanoid" id="Q9R269"/>
<dbReference type="OrthoDB" id="29745at2759"/>
<dbReference type="PhylomeDB" id="Q9R269"/>
<dbReference type="Reactome" id="R-MMU-6809371">
    <property type="pathway name" value="Formation of the cornified envelope"/>
</dbReference>
<dbReference type="Reactome" id="R-MMU-8851680">
    <property type="pathway name" value="Butyrophilin (BTN) family interactions"/>
</dbReference>
<dbReference type="BioGRID-ORCS" id="19041">
    <property type="hits" value="0 hits in 78 CRISPR screens"/>
</dbReference>
<dbReference type="CD-CODE" id="CE726F99">
    <property type="entry name" value="Postsynaptic density"/>
</dbReference>
<dbReference type="ChiTaRS" id="Ppl">
    <property type="organism name" value="mouse"/>
</dbReference>
<dbReference type="PRO" id="PR:Q9R269"/>
<dbReference type="Proteomes" id="UP000000589">
    <property type="component" value="Unplaced"/>
</dbReference>
<dbReference type="RNAct" id="Q9R269">
    <property type="molecule type" value="protein"/>
</dbReference>
<dbReference type="GO" id="GO:0001533">
    <property type="term" value="C:cornified envelope"/>
    <property type="evidence" value="ECO:0000314"/>
    <property type="project" value="MGI"/>
</dbReference>
<dbReference type="GO" id="GO:0005737">
    <property type="term" value="C:cytoplasm"/>
    <property type="evidence" value="ECO:0000314"/>
    <property type="project" value="UniProtKB"/>
</dbReference>
<dbReference type="GO" id="GO:0005856">
    <property type="term" value="C:cytoskeleton"/>
    <property type="evidence" value="ECO:0007669"/>
    <property type="project" value="UniProtKB-SubCell"/>
</dbReference>
<dbReference type="GO" id="GO:0030057">
    <property type="term" value="C:desmosome"/>
    <property type="evidence" value="ECO:0007669"/>
    <property type="project" value="UniProtKB-SubCell"/>
</dbReference>
<dbReference type="GO" id="GO:0019897">
    <property type="term" value="C:extrinsic component of plasma membrane"/>
    <property type="evidence" value="ECO:0000304"/>
    <property type="project" value="MGI"/>
</dbReference>
<dbReference type="GO" id="GO:0005886">
    <property type="term" value="C:plasma membrane"/>
    <property type="evidence" value="ECO:0000314"/>
    <property type="project" value="UniProtKB"/>
</dbReference>
<dbReference type="GO" id="GO:0045104">
    <property type="term" value="P:intermediate filament cytoskeleton organization"/>
    <property type="evidence" value="ECO:0007669"/>
    <property type="project" value="InterPro"/>
</dbReference>
<dbReference type="GO" id="GO:0031424">
    <property type="term" value="P:keratinization"/>
    <property type="evidence" value="ECO:0007669"/>
    <property type="project" value="UniProtKB-KW"/>
</dbReference>
<dbReference type="GO" id="GO:0002786">
    <property type="term" value="P:regulation of antibacterial peptide production"/>
    <property type="evidence" value="ECO:0000316"/>
    <property type="project" value="MGI"/>
</dbReference>
<dbReference type="CDD" id="cd00176">
    <property type="entry name" value="SPEC"/>
    <property type="match status" value="1"/>
</dbReference>
<dbReference type="FunFam" id="1.20.58.60:FF:000109">
    <property type="entry name" value="Periplakin"/>
    <property type="match status" value="1"/>
</dbReference>
<dbReference type="FunFam" id="1.20.58.60:FF:000143">
    <property type="entry name" value="Periplakin"/>
    <property type="match status" value="1"/>
</dbReference>
<dbReference type="FunFam" id="1.20.58.60:FF:000160">
    <property type="entry name" value="Periplakin"/>
    <property type="match status" value="1"/>
</dbReference>
<dbReference type="FunFam" id="2.30.30.40:FF:000088">
    <property type="entry name" value="Periplakin"/>
    <property type="match status" value="1"/>
</dbReference>
<dbReference type="FunFam" id="3.30.160.780:FF:000001">
    <property type="entry name" value="Plectin a"/>
    <property type="match status" value="1"/>
</dbReference>
<dbReference type="FunFam" id="1.20.58.60:FF:000030">
    <property type="entry name" value="Short stop, isoform K"/>
    <property type="match status" value="1"/>
</dbReference>
<dbReference type="Gene3D" id="1.20.58.60">
    <property type="match status" value="4"/>
</dbReference>
<dbReference type="Gene3D" id="3.30.160.780">
    <property type="match status" value="1"/>
</dbReference>
<dbReference type="Gene3D" id="2.30.30.40">
    <property type="entry name" value="SH3 Domains"/>
    <property type="match status" value="1"/>
</dbReference>
<dbReference type="InterPro" id="IPR041615">
    <property type="entry name" value="Desmoplakin_SH3"/>
</dbReference>
<dbReference type="InterPro" id="IPR043197">
    <property type="entry name" value="Plakin"/>
</dbReference>
<dbReference type="InterPro" id="IPR035915">
    <property type="entry name" value="Plakin_repeat_sf"/>
</dbReference>
<dbReference type="InterPro" id="IPR001101">
    <property type="entry name" value="Plectin_repeat"/>
</dbReference>
<dbReference type="InterPro" id="IPR001452">
    <property type="entry name" value="SH3_domain"/>
</dbReference>
<dbReference type="InterPro" id="IPR018159">
    <property type="entry name" value="Spectrin/alpha-actinin"/>
</dbReference>
<dbReference type="InterPro" id="IPR055419">
    <property type="entry name" value="Spectrin_PEPL/EVPL"/>
</dbReference>
<dbReference type="PANTHER" id="PTHR23169">
    <property type="entry name" value="ENVOPLAKIN"/>
    <property type="match status" value="1"/>
</dbReference>
<dbReference type="PANTHER" id="PTHR23169:SF7">
    <property type="entry name" value="ENVOPLAKIN"/>
    <property type="match status" value="1"/>
</dbReference>
<dbReference type="Pfam" id="PF17902">
    <property type="entry name" value="SH3_10"/>
    <property type="match status" value="1"/>
</dbReference>
<dbReference type="Pfam" id="PF23160">
    <property type="entry name" value="Spectrin_1st_PEPL"/>
    <property type="match status" value="1"/>
</dbReference>
<dbReference type="SMART" id="SM00250">
    <property type="entry name" value="PLEC"/>
    <property type="match status" value="2"/>
</dbReference>
<dbReference type="SMART" id="SM00150">
    <property type="entry name" value="SPEC"/>
    <property type="match status" value="4"/>
</dbReference>
<dbReference type="SUPFAM" id="SSF75399">
    <property type="entry name" value="Plakin repeat"/>
    <property type="match status" value="1"/>
</dbReference>
<dbReference type="SUPFAM" id="SSF46966">
    <property type="entry name" value="Spectrin repeat"/>
    <property type="match status" value="4"/>
</dbReference>
<dbReference type="PROSITE" id="PS50002">
    <property type="entry name" value="SH3"/>
    <property type="match status" value="1"/>
</dbReference>
<evidence type="ECO:0000250" key="1">
    <source>
        <dbReference type="UniProtKB" id="O60437"/>
    </source>
</evidence>
<evidence type="ECO:0000255" key="2"/>
<evidence type="ECO:0000255" key="3">
    <source>
        <dbReference type="PROSITE-ProRule" id="PRU00192"/>
    </source>
</evidence>
<evidence type="ECO:0000256" key="4">
    <source>
        <dbReference type="SAM" id="MobiDB-lite"/>
    </source>
</evidence>
<evidence type="ECO:0000269" key="5">
    <source>
    </source>
</evidence>
<evidence type="ECO:0000269" key="6">
    <source>
    </source>
</evidence>
<evidence type="ECO:0000269" key="7">
    <source>
    </source>
</evidence>
<evidence type="ECO:0000305" key="8"/>
<evidence type="ECO:0007744" key="9">
    <source>
    </source>
</evidence>
<evidence type="ECO:0007744" key="10">
    <source>
    </source>
</evidence>
<sequence length="1755" mass="204004">MHSLFRKRNKGKYSPTVQTRSISNKELSDLIEQLQKNADQVERNIVDTEAKMQSDLARMQEGQLPEHRDAALQNVSDSEKLLYVLEADSAIAKHMKHPQGDMIAEDIRQLKERVTNLRGKHKQMYSLAVKEADPRVNWDTLVDEKLDKLSSQSFGTDLPLVDSQVEQHNIFHNEVKAIGPHLAKDKEQNSELQAKYQKLLTASQARQQHLSSLQDYMQRCTNELYWLDQQAKGRMQYDWSDRNLDYPSRRRQYENFINRNLEAKEERINKLHTEGDQLLTAEHPGRNSIEAHMEAVHAEWKEYLNLLICEESHLKYMEDYHQFHKDMKDAQELLRKVDSDLNQKYSPDFKDRYQIELLLRELDDQEKALDKYEDVVRGLQRRGQQVVPLKYRRETPLKPIPVEALCDFESDQGLISRGYSYTLQKNNGESWELTDSTGKKLAAPAVCFIIPPTDPEALALADSLGSQYRSVRQKATGSKHALQQRHEVLRTENPGDASDLQGRQLLAGLDKVASDLDRQEKAITGILRPPLEQGRAIEDSAERAKGLKNITNELLQIEPEKTQCTAECEAFVQALPASGTAPLLKTRVEDTNQKYERLVWLLEAAQEKVDVANRLENSLQRGRELLASYENRLIQDDTMPESGHVLDRKRQELEAMASELQAHKSLLGEVGKNLQVAKQCSSSLASRFQEHCPDLERQEAEVHKLNQRFNNLSQQVERRAQSLQSARAAYDEYCSGYNRVLQFLAKTPSYEPQETDSLGQMETKLKNQKNLLDELASREQEVQKVYADSQQYQQAVKDYELEAEKLRSLLDLENGRNSHVNKRARLQSPAAKVKEEEAALAAKFTEVNAINRQRLQNLEFALNLLRQQPEAGVTHETLQGGKLSSGMEETWKIKKELEEEIERRQQLENEVKSAQEEIQTLKDQGPQESLVRKEVLKKVPDPALEESFQQLQQTLAEEQHKNQLLQEELGALQLRLQALEQETRDGGQEYVVKEVLRIEPDRAQEDEVLQLREELEALRRQKGAREAEVLLLQQRVAALAAEKSRVQEKVTEREVVKLQNDPQLEAEYRRLQEEHQREGTLREKQEEELSFLQAKLRRLEKERAMAEGKITVKEVLKVEKDAAVEREVNDLTRQYEDEAAKARSGQREKTELLRKIWALEEENAKVVVQEKVREIVRPDPKAESEVANLRLELVEQERKFRGAEEQLKSYQSELEALRNRGPQVEVKEVTKEVIKYTTDPETEQELQRLREEIMDKTRLIERCDLEIYQLKQEIQALKDTKPQVQTREVVQEILQFQEDPQTKKEVESLRIQLSEEQKKQVDLEGERASQEEKIKRKEEELAQQRKERVVRQEVVQYEDEPDLRAEVTAFTNSIDAELRQIDKLHVELRRLQHRRAELERQLEELERERQARRAAELEVQRLQQRLAALEQEEAKTGEKVTHTQKVVLQQDPQQTREHALLRAQLEEERHRRQLLEGELEPLRRKLAALEKAEIKEKVVFSESVQVEKGDTEQEIQRLKKSLEEESQSKRELDSEVTRLEAKLSELEFYNSKSSKELDFLREENHKLQLERQNLQLETRRLQSEIEMAATETRDLKNITTIDSGTHLNSRLWSLEKELDDLKKMSKDKDLEIDELQRRLGSVAVKREQRENHLRRSIVVIDPDTGRELSPEEAHRAGLIDWKMFVKLRSQECDWEEISVKGPNGESSVIHDRKSGKKFSIEDALQSGRLTAAQYDRYVNKDMSIQELAVLVSGQK</sequence>
<comment type="function">
    <text>Component of the cornified envelope of keratinocytes. May link the cornified envelope to desmosomes and intermediate filaments. May act as a localization signal in PKB/AKT-mediated signaling.</text>
</comment>
<comment type="subunit">
    <text evidence="1 5 7">Homodimer or a heterodimer with EVPL (By similarity). Found in a complex composed of PPL (via C-terminal linker domain), BFSP1 and BFSP2 in the retinal lens (PubMed:19029034). Within the complex interacts (via C-terminal linker domain) with BFSP2 (PubMed:19029034). Interacts with VIM (PubMed:12244133, PubMed:19029034). Binds to the PH domain of AKT1 (PubMed:12244133). Interacts with FCGR1A (By similarity). May interact with PPHLN1 (By similarity).</text>
</comment>
<comment type="interaction">
    <interactant intactId="EBI-368293">
        <id>Q9R269</id>
    </interactant>
    <interactant intactId="EBI-299269">
        <id>P20152</id>
        <label>Vim</label>
    </interactant>
    <organismsDiffer>false</organismsDiffer>
    <experiments>2</experiments>
</comment>
<comment type="interaction">
    <interactant intactId="EBI-368293">
        <id>Q9R269</id>
    </interactant>
    <interactant intactId="EBI-368344">
        <id>Q01314</id>
        <label>AKT1</label>
    </interactant>
    <organismsDiffer>true</organismsDiffer>
    <experiments>2</experiments>
</comment>
<comment type="subcellular location">
    <subcellularLocation>
        <location evidence="6">Cell junction</location>
        <location evidence="6">Desmosome</location>
    </subcellularLocation>
    <subcellularLocation>
        <location evidence="1">Cytoplasm</location>
        <location evidence="1">Cytoskeleton</location>
    </subcellularLocation>
    <subcellularLocation>
        <location evidence="7">Cell membrane</location>
    </subcellularLocation>
    <subcellularLocation>
        <location evidence="7">Cytoplasm</location>
    </subcellularLocation>
</comment>
<comment type="tissue specificity">
    <text evidence="7">Expressed in the retinal lens (at protein level).</text>
</comment>
<comment type="developmental stage">
    <text evidence="6 7">Expressed in the upper granular cell layer of dorsal lip and tongue, palate and dorsal epidermis of newborns (PubMed:15226441). Expressed in the corneal epithelium and conjunctiva, with expression prevalent in the cytoplasm of anterior lens epithelial cells, becoming predominantly membrane expressed in epithelial cells as they elongate into fiber cells at 3 weeks of age (PubMed:19029034).</text>
</comment>
<comment type="similarity">
    <text evidence="8">Belongs to the plakin or cytolinker family.</text>
</comment>
<gene>
    <name type="primary">Ppl</name>
</gene>
<accession>Q9R269</accession>
<accession>O70231</accession>
<accession>Q9CUT1</accession>
<accession>Q9JLZ7</accession>
<organism>
    <name type="scientific">Mus musculus</name>
    <name type="common">Mouse</name>
    <dbReference type="NCBI Taxonomy" id="10090"/>
    <lineage>
        <taxon>Eukaryota</taxon>
        <taxon>Metazoa</taxon>
        <taxon>Chordata</taxon>
        <taxon>Craniata</taxon>
        <taxon>Vertebrata</taxon>
        <taxon>Euteleostomi</taxon>
        <taxon>Mammalia</taxon>
        <taxon>Eutheria</taxon>
        <taxon>Euarchontoglires</taxon>
        <taxon>Glires</taxon>
        <taxon>Rodentia</taxon>
        <taxon>Myomorpha</taxon>
        <taxon>Muroidea</taxon>
        <taxon>Muridae</taxon>
        <taxon>Murinae</taxon>
        <taxon>Mus</taxon>
        <taxon>Mus</taxon>
    </lineage>
</organism>